<keyword id="KW-0378">Hydrolase</keyword>
<keyword id="KW-0464">Manganese</keyword>
<dbReference type="EC" id="3.5.4.2" evidence="1"/>
<dbReference type="EMBL" id="AP009240">
    <property type="protein sequence ID" value="BAG79473.1"/>
    <property type="molecule type" value="Genomic_DNA"/>
</dbReference>
<dbReference type="SMR" id="B6I3P6"/>
<dbReference type="KEGG" id="ecy:ECSE_3949"/>
<dbReference type="HOGENOM" id="CLU_027935_0_0_6"/>
<dbReference type="Proteomes" id="UP000008199">
    <property type="component" value="Chromosome"/>
</dbReference>
<dbReference type="GO" id="GO:0000034">
    <property type="term" value="F:adenine deaminase activity"/>
    <property type="evidence" value="ECO:0007669"/>
    <property type="project" value="UniProtKB-UniRule"/>
</dbReference>
<dbReference type="GO" id="GO:0006146">
    <property type="term" value="P:adenine catabolic process"/>
    <property type="evidence" value="ECO:0007669"/>
    <property type="project" value="InterPro"/>
</dbReference>
<dbReference type="CDD" id="cd01295">
    <property type="entry name" value="AdeC"/>
    <property type="match status" value="1"/>
</dbReference>
<dbReference type="FunFam" id="3.20.20.140:FF:000016">
    <property type="entry name" value="Adenine deaminase"/>
    <property type="match status" value="1"/>
</dbReference>
<dbReference type="Gene3D" id="3.20.20.140">
    <property type="entry name" value="Metal-dependent hydrolases"/>
    <property type="match status" value="1"/>
</dbReference>
<dbReference type="Gene3D" id="2.30.40.10">
    <property type="entry name" value="Urease, subunit C, domain 1"/>
    <property type="match status" value="1"/>
</dbReference>
<dbReference type="HAMAP" id="MF_01518">
    <property type="entry name" value="Adenine_deamin"/>
    <property type="match status" value="1"/>
</dbReference>
<dbReference type="InterPro" id="IPR006679">
    <property type="entry name" value="Adenine_deam"/>
</dbReference>
<dbReference type="InterPro" id="IPR026912">
    <property type="entry name" value="Adenine_deam_C"/>
</dbReference>
<dbReference type="InterPro" id="IPR006680">
    <property type="entry name" value="Amidohydro-rel"/>
</dbReference>
<dbReference type="InterPro" id="IPR011059">
    <property type="entry name" value="Metal-dep_hydrolase_composite"/>
</dbReference>
<dbReference type="InterPro" id="IPR032466">
    <property type="entry name" value="Metal_Hydrolase"/>
</dbReference>
<dbReference type="NCBIfam" id="TIGR01178">
    <property type="entry name" value="ade"/>
    <property type="match status" value="1"/>
</dbReference>
<dbReference type="NCBIfam" id="NF007457">
    <property type="entry name" value="PRK10027.1"/>
    <property type="match status" value="1"/>
</dbReference>
<dbReference type="PANTHER" id="PTHR11113:SF2">
    <property type="entry name" value="ADENINE DEAMINASE"/>
    <property type="match status" value="1"/>
</dbReference>
<dbReference type="PANTHER" id="PTHR11113">
    <property type="entry name" value="N-ACETYLGLUCOSAMINE-6-PHOSPHATE DEACETYLASE"/>
    <property type="match status" value="1"/>
</dbReference>
<dbReference type="Pfam" id="PF13382">
    <property type="entry name" value="Adenine_deam_C"/>
    <property type="match status" value="1"/>
</dbReference>
<dbReference type="Pfam" id="PF01979">
    <property type="entry name" value="Amidohydro_1"/>
    <property type="match status" value="1"/>
</dbReference>
<dbReference type="SUPFAM" id="SSF51338">
    <property type="entry name" value="Composite domain of metallo-dependent hydrolases"/>
    <property type="match status" value="1"/>
</dbReference>
<dbReference type="SUPFAM" id="SSF51556">
    <property type="entry name" value="Metallo-dependent hydrolases"/>
    <property type="match status" value="1"/>
</dbReference>
<reference key="1">
    <citation type="journal article" date="2008" name="DNA Res.">
        <title>Complete genome sequence and comparative analysis of the wild-type commensal Escherichia coli strain SE11 isolated from a healthy adult.</title>
        <authorList>
            <person name="Oshima K."/>
            <person name="Toh H."/>
            <person name="Ogura Y."/>
            <person name="Sasamoto H."/>
            <person name="Morita H."/>
            <person name="Park S.-H."/>
            <person name="Ooka T."/>
            <person name="Iyoda S."/>
            <person name="Taylor T.D."/>
            <person name="Hayashi T."/>
            <person name="Itoh K."/>
            <person name="Hattori M."/>
        </authorList>
    </citation>
    <scope>NUCLEOTIDE SEQUENCE [LARGE SCALE GENOMIC DNA]</scope>
    <source>
        <strain>SE11</strain>
    </source>
</reference>
<organism>
    <name type="scientific">Escherichia coli (strain SE11)</name>
    <dbReference type="NCBI Taxonomy" id="409438"/>
    <lineage>
        <taxon>Bacteria</taxon>
        <taxon>Pseudomonadati</taxon>
        <taxon>Pseudomonadota</taxon>
        <taxon>Gammaproteobacteria</taxon>
        <taxon>Enterobacterales</taxon>
        <taxon>Enterobacteriaceae</taxon>
        <taxon>Escherichia</taxon>
    </lineage>
</organism>
<evidence type="ECO:0000255" key="1">
    <source>
        <dbReference type="HAMAP-Rule" id="MF_01518"/>
    </source>
</evidence>
<name>ADEC_ECOSE</name>
<sequence>MNNSINHKFHHISRAEYQELLAVSRGDAVADYIIDNVSILDLINGGEISGPIVIKGRYIAGVGAEYADAPALQRIDARGATAVPGFIDAHLHIESSMMTPVTFETATLPRGLTTVICDPHEIVNVMGEAGFAWFARCAEQARQNQYLQVSSCVPALEGCDVNGASFTLEQMLAWRDHPQVTGLAEMMDYPGVISGQNALLDKLDAFRHLTLDGHCPGLGGKELNAYITAGIENCHESYQLEEGRRKLQLGMSLMIREGSAARNLNALAPLINEFNSPQCMLCTDDRNPWEIAHEGHIDALIRRLIEQHNVPLHVAYRVASWSTARHFGLNHLGLLAPGKQADIVLLSDARKVTVQQVLVKGEPIDAQTLQAEESARLAQSAPPYGNTIARQPVSASDFALQFTPGKRYRVIDVIHNELITHSHSSVYSENGFDRDDVSFIAVLERYGQRLAPACGLLGGFGLNEGALAATVSHDSHNIVVIGRSAEEMALAVNQVIQDGGGLCVVRNGQVQSHLPLPIAGLMSTDTAQLLAEQIDALKAAARECGPLPDEPFIQMAFLSLPVIPALKLTSQGLFDGEKFAFTTLEVTE</sequence>
<protein>
    <recommendedName>
        <fullName evidence="1">Adenine deaminase</fullName>
        <shortName evidence="1">Adenase</shortName>
        <shortName evidence="1">Adenine aminase</shortName>
        <ecNumber evidence="1">3.5.4.2</ecNumber>
    </recommendedName>
</protein>
<proteinExistence type="inferred from homology"/>
<comment type="catalytic activity">
    <reaction evidence="1">
        <text>adenine + H2O + H(+) = hypoxanthine + NH4(+)</text>
        <dbReference type="Rhea" id="RHEA:23688"/>
        <dbReference type="ChEBI" id="CHEBI:15377"/>
        <dbReference type="ChEBI" id="CHEBI:15378"/>
        <dbReference type="ChEBI" id="CHEBI:16708"/>
        <dbReference type="ChEBI" id="CHEBI:17368"/>
        <dbReference type="ChEBI" id="CHEBI:28938"/>
        <dbReference type="EC" id="3.5.4.2"/>
    </reaction>
</comment>
<comment type="cofactor">
    <cofactor evidence="1">
        <name>Mn(2+)</name>
        <dbReference type="ChEBI" id="CHEBI:29035"/>
    </cofactor>
</comment>
<comment type="subunit">
    <text evidence="1">Homodimer.</text>
</comment>
<comment type="similarity">
    <text evidence="1">Belongs to the metallo-dependent hydrolases superfamily. Adenine deaminase family.</text>
</comment>
<gene>
    <name evidence="1" type="primary">ade</name>
    <name type="ordered locus">ECSE_3949</name>
</gene>
<accession>B6I3P6</accession>
<feature type="chain" id="PRO_1000146238" description="Adenine deaminase">
    <location>
        <begin position="1"/>
        <end position="588"/>
    </location>
</feature>